<evidence type="ECO:0000269" key="1">
    <source>
    </source>
</evidence>
<evidence type="ECO:0000305" key="2">
    <source>
    </source>
</evidence>
<dbReference type="EC" id="3.1.3.-" evidence="2"/>
<dbReference type="EMBL" id="AL939113">
    <property type="protein sequence ID" value="CAB87208.1"/>
    <property type="molecule type" value="Genomic_DNA"/>
</dbReference>
<dbReference type="RefSeq" id="NP_627001.1">
    <property type="nucleotide sequence ID" value="NC_003888.3"/>
</dbReference>
<dbReference type="RefSeq" id="WP_003976029.1">
    <property type="nucleotide sequence ID" value="NZ_VNID01000010.1"/>
</dbReference>
<dbReference type="STRING" id="100226.gene:17760378"/>
<dbReference type="PaxDb" id="100226-SCO2771"/>
<dbReference type="KEGG" id="sco:SCO2771"/>
<dbReference type="PATRIC" id="fig|100226.15.peg.2828"/>
<dbReference type="eggNOG" id="ENOG50335IE">
    <property type="taxonomic scope" value="Bacteria"/>
</dbReference>
<dbReference type="HOGENOM" id="CLU_092811_0_0_11"/>
<dbReference type="InParanoid" id="Q9L082"/>
<dbReference type="OrthoDB" id="3511799at2"/>
<dbReference type="Proteomes" id="UP000001973">
    <property type="component" value="Chromosome"/>
</dbReference>
<dbReference type="GO" id="GO:0016791">
    <property type="term" value="F:phosphatase activity"/>
    <property type="evidence" value="ECO:0000314"/>
    <property type="project" value="UniProtKB"/>
</dbReference>
<dbReference type="InterPro" id="IPR031423">
    <property type="entry name" value="Phosphatase_SCO2771"/>
</dbReference>
<dbReference type="Pfam" id="PF15698">
    <property type="entry name" value="Phosphatase"/>
    <property type="match status" value="1"/>
</dbReference>
<keyword id="KW-0378">Hydrolase</keyword>
<keyword id="KW-1185">Reference proteome</keyword>
<proteinExistence type="evidence at protein level"/>
<sequence length="262" mass="28390">MPIPGTPSRAELAEHLVRTRIAGDVATPRENNLSHYRKLANGDRGFWLGLELGDRWSDEQDVLAVMAERVGVNDDPEHRYGQDTIDPELTISALERMAGRLRKAADGGQRVLFATGHPGGLLDVHRATAAALRDAGCEIVVIPEGLTTEEGYVQQFADVSVLEHGASLWHTHSGEPMKAILTGLEREGRPLPDLVVADHGWAGYAAQHGVDSVGYADCNDPALFLAESEGTLQVAVPLDDHVVSPRYYDPMTAYLLTEAGLK</sequence>
<reference key="1">
    <citation type="journal article" date="2002" name="Nature">
        <title>Complete genome sequence of the model actinomycete Streptomyces coelicolor A3(2).</title>
        <authorList>
            <person name="Bentley S.D."/>
            <person name="Chater K.F."/>
            <person name="Cerdeno-Tarraga A.-M."/>
            <person name="Challis G.L."/>
            <person name="Thomson N.R."/>
            <person name="James K.D."/>
            <person name="Harris D.E."/>
            <person name="Quail M.A."/>
            <person name="Kieser H."/>
            <person name="Harper D."/>
            <person name="Bateman A."/>
            <person name="Brown S."/>
            <person name="Chandra G."/>
            <person name="Chen C.W."/>
            <person name="Collins M."/>
            <person name="Cronin A."/>
            <person name="Fraser A."/>
            <person name="Goble A."/>
            <person name="Hidalgo J."/>
            <person name="Hornsby T."/>
            <person name="Howarth S."/>
            <person name="Huang C.-H."/>
            <person name="Kieser T."/>
            <person name="Larke L."/>
            <person name="Murphy L.D."/>
            <person name="Oliver K."/>
            <person name="O'Neil S."/>
            <person name="Rabbinowitsch E."/>
            <person name="Rajandream M.A."/>
            <person name="Rutherford K.M."/>
            <person name="Rutter S."/>
            <person name="Seeger K."/>
            <person name="Saunders D."/>
            <person name="Sharp S."/>
            <person name="Squares R."/>
            <person name="Squares S."/>
            <person name="Taylor K."/>
            <person name="Warren T."/>
            <person name="Wietzorrek A."/>
            <person name="Woodward J.R."/>
            <person name="Barrell B.G."/>
            <person name="Parkhill J."/>
            <person name="Hopwood D.A."/>
        </authorList>
    </citation>
    <scope>NUCLEOTIDE SEQUENCE [LARGE SCALE GENOMIC DNA]</scope>
    <source>
        <strain>ATCC BAA-471 / A3(2) / M145</strain>
    </source>
</reference>
<reference key="2">
    <citation type="journal article" date="2008" name="Curr. Microbiol.">
        <title>The histidinol phosphate phosphatase involved in histidine biosynthetic pathway is encoded by SCO5208 (hisN) in Streptomyces coelicolor A3(2).</title>
        <authorList>
            <person name="Marineo S."/>
            <person name="Cusimano M.G."/>
            <person name="Limauro D."/>
            <person name="Coticchio G."/>
            <person name="Puglia A.M."/>
        </authorList>
    </citation>
    <scope>FUNCTION AS A PHOSPHATASE</scope>
    <scope>DISRUPTION PHENOTYPE</scope>
    <source>
        <strain>ATCC BAA-471 / A3(2) / M145</strain>
    </source>
</reference>
<comment type="function">
    <text evidence="1">Displays phosphatase activity against p-nitrophenyl phosphate (pNPP) in vitro; however, the physiological substrate is unknown.</text>
</comment>
<comment type="disruption phenotype">
    <text evidence="1">Disruption of this gene does not cause histidine auxotrophy.</text>
</comment>
<organism>
    <name type="scientific">Streptomyces coelicolor (strain ATCC BAA-471 / A3(2) / M145)</name>
    <dbReference type="NCBI Taxonomy" id="100226"/>
    <lineage>
        <taxon>Bacteria</taxon>
        <taxon>Bacillati</taxon>
        <taxon>Actinomycetota</taxon>
        <taxon>Actinomycetes</taxon>
        <taxon>Kitasatosporales</taxon>
        <taxon>Streptomycetaceae</taxon>
        <taxon>Streptomyces</taxon>
        <taxon>Streptomyces albidoflavus group</taxon>
    </lineage>
</organism>
<feature type="chain" id="PRO_0000404326" description="Phosphatase SCO2771">
    <location>
        <begin position="1"/>
        <end position="262"/>
    </location>
</feature>
<accession>Q9L082</accession>
<gene>
    <name type="ordered locus">SCO2771</name>
    <name type="ORF">SCC105.02</name>
</gene>
<protein>
    <recommendedName>
        <fullName>Phosphatase SCO2771</fullName>
        <ecNumber evidence="2">3.1.3.-</ecNumber>
    </recommendedName>
</protein>
<name>Y2771_STRCO</name>